<proteinExistence type="evidence at transcript level"/>
<dbReference type="EMBL" id="BC129044">
    <property type="protein sequence ID" value="AAI29045.1"/>
    <property type="molecule type" value="mRNA"/>
</dbReference>
<dbReference type="EMBL" id="BC134218">
    <property type="protein sequence ID" value="AAI34219.1"/>
    <property type="molecule type" value="mRNA"/>
</dbReference>
<dbReference type="RefSeq" id="NP_001074045.1">
    <property type="nucleotide sequence ID" value="NM_001080576.1"/>
</dbReference>
<dbReference type="SMR" id="A1L1G1"/>
<dbReference type="FunCoup" id="A1L1G1">
    <property type="interactions" value="205"/>
</dbReference>
<dbReference type="STRING" id="7955.ENSDARP00000094207"/>
<dbReference type="PaxDb" id="7955-ENSDARP00000094207"/>
<dbReference type="PeptideAtlas" id="A1L1G1"/>
<dbReference type="Ensembl" id="ENSDART00000103431">
    <property type="protein sequence ID" value="ENSDARP00000094207"/>
    <property type="gene ID" value="ENSDARG00000011245"/>
</dbReference>
<dbReference type="GeneID" id="560190"/>
<dbReference type="KEGG" id="dre:560190"/>
<dbReference type="AGR" id="ZFIN:ZDB-GENE-070112-1732"/>
<dbReference type="CTD" id="54845"/>
<dbReference type="ZFIN" id="ZDB-GENE-070112-1732">
    <property type="gene designation" value="esrp1"/>
</dbReference>
<dbReference type="eggNOG" id="KOG1365">
    <property type="taxonomic scope" value="Eukaryota"/>
</dbReference>
<dbReference type="InParanoid" id="A1L1G1"/>
<dbReference type="OMA" id="FTLTFHV"/>
<dbReference type="OrthoDB" id="431068at2759"/>
<dbReference type="PhylomeDB" id="A1L1G1"/>
<dbReference type="TreeFam" id="TF316157"/>
<dbReference type="PRO" id="PR:A1L1G1"/>
<dbReference type="Proteomes" id="UP000000437">
    <property type="component" value="Chromosome 16"/>
</dbReference>
<dbReference type="Bgee" id="ENSDARG00000011245">
    <property type="expression patterns" value="Expressed in caudal fin and 34 other cell types or tissues"/>
</dbReference>
<dbReference type="GO" id="GO:0005654">
    <property type="term" value="C:nucleoplasm"/>
    <property type="evidence" value="ECO:0000318"/>
    <property type="project" value="GO_Central"/>
</dbReference>
<dbReference type="GO" id="GO:0005634">
    <property type="term" value="C:nucleus"/>
    <property type="evidence" value="ECO:0000250"/>
    <property type="project" value="UniProtKB"/>
</dbReference>
<dbReference type="GO" id="GO:1990904">
    <property type="term" value="C:ribonucleoprotein complex"/>
    <property type="evidence" value="ECO:0000318"/>
    <property type="project" value="GO_Central"/>
</dbReference>
<dbReference type="GO" id="GO:0003729">
    <property type="term" value="F:mRNA binding"/>
    <property type="evidence" value="ECO:0000250"/>
    <property type="project" value="UniProtKB"/>
</dbReference>
<dbReference type="GO" id="GO:1904888">
    <property type="term" value="P:cranial skeletal system development"/>
    <property type="evidence" value="ECO:0000316"/>
    <property type="project" value="ZFIN"/>
</dbReference>
<dbReference type="GO" id="GO:1905748">
    <property type="term" value="P:hard palate morphogenesis"/>
    <property type="evidence" value="ECO:0000316"/>
    <property type="project" value="ZFIN"/>
</dbReference>
<dbReference type="GO" id="GO:0006397">
    <property type="term" value="P:mRNA processing"/>
    <property type="evidence" value="ECO:0007669"/>
    <property type="project" value="UniProtKB-KW"/>
</dbReference>
<dbReference type="GO" id="GO:0043484">
    <property type="term" value="P:regulation of RNA splicing"/>
    <property type="evidence" value="ECO:0000250"/>
    <property type="project" value="UniProtKB"/>
</dbReference>
<dbReference type="GO" id="GO:0008380">
    <property type="term" value="P:RNA splicing"/>
    <property type="evidence" value="ECO:0007669"/>
    <property type="project" value="UniProtKB-KW"/>
</dbReference>
<dbReference type="CDD" id="cd12736">
    <property type="entry name" value="RRM1_ESRP1"/>
    <property type="match status" value="1"/>
</dbReference>
<dbReference type="CDD" id="cd12742">
    <property type="entry name" value="RRM3_ESRP1_ESRP2"/>
    <property type="match status" value="1"/>
</dbReference>
<dbReference type="FunFam" id="3.30.70.330:FF:000041">
    <property type="entry name" value="Epithelial splicing regulatory protein 1"/>
    <property type="match status" value="1"/>
</dbReference>
<dbReference type="FunFam" id="3.30.70.330:FF:000070">
    <property type="entry name" value="Epithelial splicing regulatory protein 1"/>
    <property type="match status" value="1"/>
</dbReference>
<dbReference type="FunFam" id="3.30.70.330:FF:000056">
    <property type="entry name" value="epithelial splicing regulatory protein 1 isoform X1"/>
    <property type="match status" value="1"/>
</dbReference>
<dbReference type="Gene3D" id="3.30.70.330">
    <property type="match status" value="3"/>
</dbReference>
<dbReference type="Gene3D" id="3.30.420.10">
    <property type="entry name" value="Ribonuclease H-like superfamily/Ribonuclease H"/>
    <property type="match status" value="1"/>
</dbReference>
<dbReference type="InterPro" id="IPR050666">
    <property type="entry name" value="ESRP"/>
</dbReference>
<dbReference type="InterPro" id="IPR034427">
    <property type="entry name" value="ESRP1_RRM1"/>
</dbReference>
<dbReference type="InterPro" id="IPR013520">
    <property type="entry name" value="Exonuclease_RNaseT/DNA_pol3"/>
</dbReference>
<dbReference type="InterPro" id="IPR012677">
    <property type="entry name" value="Nucleotide-bd_a/b_plait_sf"/>
</dbReference>
<dbReference type="InterPro" id="IPR035979">
    <property type="entry name" value="RBD_domain_sf"/>
</dbReference>
<dbReference type="InterPro" id="IPR012337">
    <property type="entry name" value="RNaseH-like_sf"/>
</dbReference>
<dbReference type="InterPro" id="IPR036397">
    <property type="entry name" value="RNaseH_sf"/>
</dbReference>
<dbReference type="InterPro" id="IPR000504">
    <property type="entry name" value="RRM_dom"/>
</dbReference>
<dbReference type="PANTHER" id="PTHR13976">
    <property type="entry name" value="HETEROGENEOUS NUCLEAR RIBONUCLEOPROTEIN-RELATED"/>
    <property type="match status" value="1"/>
</dbReference>
<dbReference type="Pfam" id="PF00076">
    <property type="entry name" value="RRM_1"/>
    <property type="match status" value="1"/>
</dbReference>
<dbReference type="SMART" id="SM00479">
    <property type="entry name" value="EXOIII"/>
    <property type="match status" value="1"/>
</dbReference>
<dbReference type="SMART" id="SM00360">
    <property type="entry name" value="RRM"/>
    <property type="match status" value="3"/>
</dbReference>
<dbReference type="SUPFAM" id="SSF53098">
    <property type="entry name" value="Ribonuclease H-like"/>
    <property type="match status" value="1"/>
</dbReference>
<dbReference type="SUPFAM" id="SSF54928">
    <property type="entry name" value="RNA-binding domain, RBD"/>
    <property type="match status" value="3"/>
</dbReference>
<dbReference type="PROSITE" id="PS50102">
    <property type="entry name" value="RRM"/>
    <property type="match status" value="2"/>
</dbReference>
<name>ESRP1_DANRE</name>
<evidence type="ECO:0000250" key="1"/>
<evidence type="ECO:0000255" key="2">
    <source>
        <dbReference type="PROSITE-ProRule" id="PRU00176"/>
    </source>
</evidence>
<evidence type="ECO:0000305" key="3"/>
<evidence type="ECO:0000312" key="4">
    <source>
        <dbReference type="EMBL" id="AAI29045.1"/>
    </source>
</evidence>
<organism>
    <name type="scientific">Danio rerio</name>
    <name type="common">Zebrafish</name>
    <name type="synonym">Brachydanio rerio</name>
    <dbReference type="NCBI Taxonomy" id="7955"/>
    <lineage>
        <taxon>Eukaryota</taxon>
        <taxon>Metazoa</taxon>
        <taxon>Chordata</taxon>
        <taxon>Craniata</taxon>
        <taxon>Vertebrata</taxon>
        <taxon>Euteleostomi</taxon>
        <taxon>Actinopterygii</taxon>
        <taxon>Neopterygii</taxon>
        <taxon>Teleostei</taxon>
        <taxon>Ostariophysi</taxon>
        <taxon>Cypriniformes</taxon>
        <taxon>Danionidae</taxon>
        <taxon>Danioninae</taxon>
        <taxon>Danio</taxon>
    </lineage>
</organism>
<comment type="function">
    <text evidence="1">mRNA splicing factor that regulates the formation of epithelial cell-specific isoforms. Specifically regulates the expression of FGFR2-IIIb, an epithelial cell-specific isoform of fgfr2. Acts by directly binding specific sequences in mRNAs. Binds the GU-rich sequence motifs in the ISE/ISS-3, a cis-element regulatory region present in the mRNA of fgfr2 (By similarity).</text>
</comment>
<comment type="subcellular location">
    <subcellularLocation>
        <location evidence="1">Nucleus</location>
    </subcellularLocation>
</comment>
<comment type="similarity">
    <text evidence="3">Belongs to the ESRP family.</text>
</comment>
<keyword id="KW-0507">mRNA processing</keyword>
<keyword id="KW-0508">mRNA splicing</keyword>
<keyword id="KW-0539">Nucleus</keyword>
<keyword id="KW-1185">Reference proteome</keyword>
<keyword id="KW-0677">Repeat</keyword>
<keyword id="KW-0694">RNA-binding</keyword>
<accession>A1L1G1</accession>
<accession>A4FVM7</accession>
<reference evidence="4" key="1">
    <citation type="submission" date="2006-12" db="EMBL/GenBank/DDBJ databases">
        <authorList>
            <consortium name="NIH - Zebrafish Gene Collection (ZGC) project"/>
        </authorList>
    </citation>
    <scope>NUCLEOTIDE SEQUENCE [LARGE SCALE MRNA]</scope>
    <source>
        <tissue>Skin</tissue>
    </source>
</reference>
<sequence>MTVNPDYLVLLFTTTSGASGDKLGSDEKEIVQLVWQVVDLATKKAGQVNELLVKPDHIELSEECQELSGLTDEALTPVDPLEVAIDQLNQRLCAEVDTGAGNTFYLCTDGQLHVRQVLHPEASSKNILLPDCFFSFFDLRKEFKKEFPSEVKLKDLNLQVMADHLNVAVDSSLHAFTAYKVQQMVDIVLALISEPTCHEFTFPEKVNEKFETGTCSKMERVDDNTVIRARGLPWQSSDQDIARFFRGLNIAKGGAALCLNAQGRRNGEALVRFESEEHRDLALQRHKHHMGGRYIEVYKATGEDFLKIAGGTSNEVASFLSRENQIIVRMRGLPFNATAEQVLQFFSPACPVTDGSEGILFVRFPDGRPTGDAFVLFSCEEHAQNALKKHKDMLGKRYIELFKSTAAEVQQVLNKYSSAPLIPVAPSPILSVVAPPTFVPQTAAVPGVRDCVRLRGLPYDASIQDILVFLGEYGADIKTHGVHMVLNHQGRPSGEAFIQMRSAERAFLAAQRCHKRSMKERYVEVFACSAQEVNIVLMGGTLNRSGLSPPPCLSPPSYTFPHGAPVLPAGAVLPAGAVLPVESAGIYPSQFLLGPRPPPHTTTFYPASNTLYMNYTTYYPSPPGSPSNISYFPTGHTPSAGSVLSAQPTALIRMQGHAHSHAYNNGVKEILSMVQGYQPGNSDAFVTFPSMLSAKQPIGDQTVGGGAYLDLQLL</sequence>
<gene>
    <name type="primary">esrp1</name>
    <name type="synonym">rbm35a</name>
    <name type="ORF">zgc:154050</name>
</gene>
<protein>
    <recommendedName>
        <fullName>Epithelial splicing regulatory protein 1</fullName>
    </recommendedName>
    <alternativeName>
        <fullName>RNA-binding motif protein 35A</fullName>
    </alternativeName>
    <alternativeName>
        <fullName>RNA-binding protein 35A</fullName>
    </alternativeName>
</protein>
<feature type="chain" id="PRO_0000282349" description="Epithelial splicing regulatory protein 1">
    <location>
        <begin position="1"/>
        <end position="714"/>
    </location>
</feature>
<feature type="domain" description="RRM 1" evidence="2">
    <location>
        <begin position="225"/>
        <end position="302"/>
    </location>
</feature>
<feature type="domain" description="RRM 2" evidence="2">
    <location>
        <begin position="326"/>
        <end position="406"/>
    </location>
</feature>
<feature type="domain" description="RRM 3" evidence="2">
    <location>
        <begin position="450"/>
        <end position="530"/>
    </location>
</feature>